<dbReference type="EC" id="3.6.5.3" evidence="1"/>
<dbReference type="EMBL" id="CP000867">
    <property type="protein sequence ID" value="ABX02277.1"/>
    <property type="molecule type" value="Genomic_DNA"/>
</dbReference>
<dbReference type="SMR" id="A9AAA4"/>
<dbReference type="STRING" id="444158.MmarC6_1464"/>
<dbReference type="KEGG" id="mmx:MmarC6_1464"/>
<dbReference type="eggNOG" id="arCOG01563">
    <property type="taxonomic scope" value="Archaea"/>
</dbReference>
<dbReference type="HOGENOM" id="CLU_027154_0_1_2"/>
<dbReference type="OrthoDB" id="7798at2157"/>
<dbReference type="PhylomeDB" id="A9AAA4"/>
<dbReference type="GO" id="GO:0005829">
    <property type="term" value="C:cytosol"/>
    <property type="evidence" value="ECO:0007669"/>
    <property type="project" value="TreeGrafter"/>
</dbReference>
<dbReference type="GO" id="GO:0005525">
    <property type="term" value="F:GTP binding"/>
    <property type="evidence" value="ECO:0007669"/>
    <property type="project" value="UniProtKB-UniRule"/>
</dbReference>
<dbReference type="GO" id="GO:0003924">
    <property type="term" value="F:GTPase activity"/>
    <property type="evidence" value="ECO:0007669"/>
    <property type="project" value="InterPro"/>
</dbReference>
<dbReference type="GO" id="GO:0046872">
    <property type="term" value="F:metal ion binding"/>
    <property type="evidence" value="ECO:0007669"/>
    <property type="project" value="UniProtKB-KW"/>
</dbReference>
<dbReference type="GO" id="GO:0003746">
    <property type="term" value="F:translation elongation factor activity"/>
    <property type="evidence" value="ECO:0007669"/>
    <property type="project" value="UniProtKB-UniRule"/>
</dbReference>
<dbReference type="GO" id="GO:0003743">
    <property type="term" value="F:translation initiation factor activity"/>
    <property type="evidence" value="ECO:0007669"/>
    <property type="project" value="UniProtKB-KW"/>
</dbReference>
<dbReference type="GO" id="GO:0000049">
    <property type="term" value="F:tRNA binding"/>
    <property type="evidence" value="ECO:0007669"/>
    <property type="project" value="InterPro"/>
</dbReference>
<dbReference type="GO" id="GO:0001731">
    <property type="term" value="P:formation of translation preinitiation complex"/>
    <property type="evidence" value="ECO:0007669"/>
    <property type="project" value="TreeGrafter"/>
</dbReference>
<dbReference type="CDD" id="cd01888">
    <property type="entry name" value="eIF2_gamma"/>
    <property type="match status" value="1"/>
</dbReference>
<dbReference type="CDD" id="cd03688">
    <property type="entry name" value="eIF2_gamma_II"/>
    <property type="match status" value="1"/>
</dbReference>
<dbReference type="CDD" id="cd15490">
    <property type="entry name" value="eIF2_gamma_III"/>
    <property type="match status" value="1"/>
</dbReference>
<dbReference type="FunFam" id="2.40.30.10:FF:000009">
    <property type="entry name" value="Eukaryotic translation initiation factor 2 subunit gamma"/>
    <property type="match status" value="1"/>
</dbReference>
<dbReference type="FunFam" id="3.40.50.300:FF:000065">
    <property type="entry name" value="Eukaryotic translation initiation factor 2 subunit gamma"/>
    <property type="match status" value="1"/>
</dbReference>
<dbReference type="FunFam" id="2.40.30.10:FF:000075">
    <property type="entry name" value="Translation initiation factor 2 subunit gamma"/>
    <property type="match status" value="1"/>
</dbReference>
<dbReference type="Gene3D" id="3.40.50.300">
    <property type="entry name" value="P-loop containing nucleotide triphosphate hydrolases"/>
    <property type="match status" value="1"/>
</dbReference>
<dbReference type="Gene3D" id="2.40.30.10">
    <property type="entry name" value="Translation factors"/>
    <property type="match status" value="2"/>
</dbReference>
<dbReference type="HAMAP" id="MF_00119">
    <property type="entry name" value="eIF_2_gamma"/>
    <property type="match status" value="1"/>
</dbReference>
<dbReference type="InterPro" id="IPR050543">
    <property type="entry name" value="eIF2G"/>
</dbReference>
<dbReference type="InterPro" id="IPR015256">
    <property type="entry name" value="eIF2g_C"/>
</dbReference>
<dbReference type="InterPro" id="IPR044127">
    <property type="entry name" value="eIF2g_dom_2"/>
</dbReference>
<dbReference type="InterPro" id="IPR044128">
    <property type="entry name" value="eIF2g_GTP-bd"/>
</dbReference>
<dbReference type="InterPro" id="IPR027417">
    <property type="entry name" value="P-loop_NTPase"/>
</dbReference>
<dbReference type="InterPro" id="IPR005225">
    <property type="entry name" value="Small_GTP-bd"/>
</dbReference>
<dbReference type="InterPro" id="IPR000795">
    <property type="entry name" value="T_Tr_GTP-bd_dom"/>
</dbReference>
<dbReference type="InterPro" id="IPR022424">
    <property type="entry name" value="TIF2_gsu"/>
</dbReference>
<dbReference type="InterPro" id="IPR009000">
    <property type="entry name" value="Transl_B-barrel_sf"/>
</dbReference>
<dbReference type="InterPro" id="IPR009001">
    <property type="entry name" value="Transl_elong_EF1A/Init_IF2_C"/>
</dbReference>
<dbReference type="NCBIfam" id="TIGR03680">
    <property type="entry name" value="eif2g_arch"/>
    <property type="match status" value="1"/>
</dbReference>
<dbReference type="NCBIfam" id="NF003077">
    <property type="entry name" value="PRK04000.1"/>
    <property type="match status" value="1"/>
</dbReference>
<dbReference type="NCBIfam" id="TIGR00231">
    <property type="entry name" value="small_GTP"/>
    <property type="match status" value="1"/>
</dbReference>
<dbReference type="PANTHER" id="PTHR42854">
    <property type="entry name" value="EUKARYOTIC TRANSLATION INITIATION FACTOR 2 SUBUNIT 3 FAMILY MEMBER"/>
    <property type="match status" value="1"/>
</dbReference>
<dbReference type="PANTHER" id="PTHR42854:SF3">
    <property type="entry name" value="EUKARYOTIC TRANSLATION INITIATION FACTOR 2 SUBUNIT 3-RELATED"/>
    <property type="match status" value="1"/>
</dbReference>
<dbReference type="Pfam" id="PF09173">
    <property type="entry name" value="eIF2_C"/>
    <property type="match status" value="1"/>
</dbReference>
<dbReference type="Pfam" id="PF00009">
    <property type="entry name" value="GTP_EFTU"/>
    <property type="match status" value="1"/>
</dbReference>
<dbReference type="PRINTS" id="PR00315">
    <property type="entry name" value="ELONGATNFCT"/>
</dbReference>
<dbReference type="SUPFAM" id="SSF50465">
    <property type="entry name" value="EF-Tu/eEF-1alpha/eIF2-gamma C-terminal domain"/>
    <property type="match status" value="1"/>
</dbReference>
<dbReference type="SUPFAM" id="SSF52540">
    <property type="entry name" value="P-loop containing nucleoside triphosphate hydrolases"/>
    <property type="match status" value="1"/>
</dbReference>
<dbReference type="SUPFAM" id="SSF50447">
    <property type="entry name" value="Translation proteins"/>
    <property type="match status" value="1"/>
</dbReference>
<dbReference type="PROSITE" id="PS51722">
    <property type="entry name" value="G_TR_2"/>
    <property type="match status" value="1"/>
</dbReference>
<protein>
    <recommendedName>
        <fullName evidence="1">Translation initiation factor 2 subunit gamma</fullName>
        <ecNumber evidence="1">3.6.5.3</ecNumber>
    </recommendedName>
    <alternativeName>
        <fullName evidence="1">aIF2-gamma</fullName>
    </alternativeName>
    <alternativeName>
        <fullName evidence="1">eIF-2-gamma</fullName>
    </alternativeName>
</protein>
<gene>
    <name evidence="1" type="primary">eif2g</name>
    <name type="ordered locus">MmarC6_1464</name>
</gene>
<comment type="function">
    <text evidence="1">eIF-2 functions in the early steps of protein synthesis by forming a ternary complex with GTP and initiator tRNA.</text>
</comment>
<comment type="catalytic activity">
    <reaction evidence="1">
        <text>GTP + H2O = GDP + phosphate + H(+)</text>
        <dbReference type="Rhea" id="RHEA:19669"/>
        <dbReference type="ChEBI" id="CHEBI:15377"/>
        <dbReference type="ChEBI" id="CHEBI:15378"/>
        <dbReference type="ChEBI" id="CHEBI:37565"/>
        <dbReference type="ChEBI" id="CHEBI:43474"/>
        <dbReference type="ChEBI" id="CHEBI:58189"/>
        <dbReference type="EC" id="3.6.5.3"/>
    </reaction>
</comment>
<comment type="cofactor">
    <cofactor evidence="1">
        <name>Mg(2+)</name>
        <dbReference type="ChEBI" id="CHEBI:18420"/>
    </cofactor>
</comment>
<comment type="subunit">
    <text evidence="1">Heterotrimer composed of an alpha, a beta and a gamma chain.</text>
</comment>
<comment type="similarity">
    <text evidence="1">Belongs to the TRAFAC class translation factor GTPase superfamily. Classic translation factor GTPase family. EIF2G subfamily.</text>
</comment>
<accession>A9AAA4</accession>
<feature type="chain" id="PRO_1000095098" description="Translation initiation factor 2 subunit gamma">
    <location>
        <begin position="1"/>
        <end position="410"/>
    </location>
</feature>
<feature type="domain" description="tr-type G" evidence="1">
    <location>
        <begin position="6"/>
        <end position="203"/>
    </location>
</feature>
<feature type="region of interest" description="G1" evidence="1">
    <location>
        <begin position="15"/>
        <end position="22"/>
    </location>
</feature>
<feature type="region of interest" description="G2" evidence="1">
    <location>
        <begin position="43"/>
        <end position="47"/>
    </location>
</feature>
<feature type="region of interest" description="G3" evidence="1">
    <location>
        <begin position="90"/>
        <end position="93"/>
    </location>
</feature>
<feature type="region of interest" description="G4" evidence="1">
    <location>
        <begin position="146"/>
        <end position="149"/>
    </location>
</feature>
<feature type="region of interest" description="G5" evidence="1">
    <location>
        <begin position="181"/>
        <end position="183"/>
    </location>
</feature>
<feature type="binding site" evidence="1">
    <location>
        <begin position="18"/>
        <end position="23"/>
    </location>
    <ligand>
        <name>GTP</name>
        <dbReference type="ChEBI" id="CHEBI:37565"/>
    </ligand>
</feature>
<feature type="binding site" evidence="1">
    <location>
        <position position="18"/>
    </location>
    <ligand>
        <name>Mg(2+)</name>
        <dbReference type="ChEBI" id="CHEBI:18420"/>
        <label>2</label>
    </ligand>
</feature>
<feature type="binding site" evidence="1">
    <location>
        <position position="22"/>
    </location>
    <ligand>
        <name>Mg(2+)</name>
        <dbReference type="ChEBI" id="CHEBI:18420"/>
        <label>1</label>
    </ligand>
</feature>
<feature type="binding site" evidence="1">
    <location>
        <position position="43"/>
    </location>
    <ligand>
        <name>Mg(2+)</name>
        <dbReference type="ChEBI" id="CHEBI:18420"/>
        <label>2</label>
    </ligand>
</feature>
<feature type="binding site" evidence="1">
    <location>
        <position position="45"/>
    </location>
    <ligand>
        <name>Mg(2+)</name>
        <dbReference type="ChEBI" id="CHEBI:18420"/>
        <label>1</label>
    </ligand>
</feature>
<feature type="binding site" evidence="1">
    <location>
        <position position="58"/>
    </location>
    <ligand>
        <name>Zn(2+)</name>
        <dbReference type="ChEBI" id="CHEBI:29105"/>
    </ligand>
</feature>
<feature type="binding site" evidence="1">
    <location>
        <position position="61"/>
    </location>
    <ligand>
        <name>Zn(2+)</name>
        <dbReference type="ChEBI" id="CHEBI:29105"/>
    </ligand>
</feature>
<feature type="binding site" evidence="1">
    <location>
        <position position="73"/>
    </location>
    <ligand>
        <name>Zn(2+)</name>
        <dbReference type="ChEBI" id="CHEBI:29105"/>
    </ligand>
</feature>
<feature type="binding site" evidence="1">
    <location>
        <position position="76"/>
    </location>
    <ligand>
        <name>Zn(2+)</name>
        <dbReference type="ChEBI" id="CHEBI:29105"/>
    </ligand>
</feature>
<feature type="binding site" evidence="1">
    <location>
        <begin position="146"/>
        <end position="149"/>
    </location>
    <ligand>
        <name>GTP</name>
        <dbReference type="ChEBI" id="CHEBI:37565"/>
    </ligand>
</feature>
<feature type="binding site" evidence="1">
    <location>
        <begin position="181"/>
        <end position="183"/>
    </location>
    <ligand>
        <name>GTP</name>
        <dbReference type="ChEBI" id="CHEBI:37565"/>
    </ligand>
</feature>
<organism>
    <name type="scientific">Methanococcus maripaludis (strain C6 / ATCC BAA-1332)</name>
    <dbReference type="NCBI Taxonomy" id="444158"/>
    <lineage>
        <taxon>Archaea</taxon>
        <taxon>Methanobacteriati</taxon>
        <taxon>Methanobacteriota</taxon>
        <taxon>Methanomada group</taxon>
        <taxon>Methanococci</taxon>
        <taxon>Methanococcales</taxon>
        <taxon>Methanococcaceae</taxon>
        <taxon>Methanococcus</taxon>
    </lineage>
</organism>
<keyword id="KW-0342">GTP-binding</keyword>
<keyword id="KW-0378">Hydrolase</keyword>
<keyword id="KW-0396">Initiation factor</keyword>
<keyword id="KW-0460">Magnesium</keyword>
<keyword id="KW-0479">Metal-binding</keyword>
<keyword id="KW-0547">Nucleotide-binding</keyword>
<keyword id="KW-0648">Protein biosynthesis</keyword>
<keyword id="KW-0862">Zinc</keyword>
<reference key="1">
    <citation type="submission" date="2007-10" db="EMBL/GenBank/DDBJ databases">
        <title>Complete sequence of Methanococcus maripaludis C6.</title>
        <authorList>
            <consortium name="US DOE Joint Genome Institute"/>
            <person name="Copeland A."/>
            <person name="Lucas S."/>
            <person name="Lapidus A."/>
            <person name="Barry K."/>
            <person name="Glavina del Rio T."/>
            <person name="Dalin E."/>
            <person name="Tice H."/>
            <person name="Pitluck S."/>
            <person name="Clum A."/>
            <person name="Schmutz J."/>
            <person name="Larimer F."/>
            <person name="Land M."/>
            <person name="Hauser L."/>
            <person name="Kyrpides N."/>
            <person name="Mikhailova N."/>
            <person name="Sieprawska-Lupa M."/>
            <person name="Whitman W.B."/>
            <person name="Richardson P."/>
        </authorList>
    </citation>
    <scope>NUCLEOTIDE SEQUENCE [LARGE SCALE GENOMIC DNA]</scope>
    <source>
        <strain>C6 / ATCC BAA-1332</strain>
    </source>
</reference>
<sequence length="410" mass="43930">MAASNQSEVNIGMVGHVDHGKTSLTRKLTGVWTDTHSEELKRGISIRLGYADCEIKKCETCDEPECYTVDKKCDACGGKVDTLRKISFVDAPGHETLMATMLSGASLMDGAILVIAASEECPQPQTKEHLMALDALGVEHILIVQNKIDLVTEEAAIENYNQIKEFTKGTVAENAPIIPVSAHHGANLDVLLKAIQEFIPTPKRDETLTPKLYVARSFDVNKPGSEIKDLKGGVIGGSIIQGALKVGDDLEIRPGIKVTEGNKTHWVPIITKIISLGVGNKKLKTASPGGLIGVGTELDPNLTKSDALSGSLAGLPGTLPETLEKMVIKPQLLERVVGSQDELIIEPLKTNEVLMLNVGTSTTVGVTVSARADKAEIKLKLPVCADKGDRVAISRKIGSRWRLIGYGIIL</sequence>
<evidence type="ECO:0000255" key="1">
    <source>
        <dbReference type="HAMAP-Rule" id="MF_00119"/>
    </source>
</evidence>
<name>IF2G_METM6</name>
<proteinExistence type="inferred from homology"/>